<proteinExistence type="inferred from homology"/>
<name>FMT_SALG2</name>
<feature type="chain" id="PRO_1000098438" description="Methionyl-tRNA formyltransferase">
    <location>
        <begin position="1"/>
        <end position="315"/>
    </location>
</feature>
<feature type="binding site" evidence="1">
    <location>
        <begin position="113"/>
        <end position="116"/>
    </location>
    <ligand>
        <name>(6S)-5,6,7,8-tetrahydrofolate</name>
        <dbReference type="ChEBI" id="CHEBI:57453"/>
    </ligand>
</feature>
<evidence type="ECO:0000255" key="1">
    <source>
        <dbReference type="HAMAP-Rule" id="MF_00182"/>
    </source>
</evidence>
<organism>
    <name type="scientific">Salmonella gallinarum (strain 287/91 / NCTC 13346)</name>
    <dbReference type="NCBI Taxonomy" id="550538"/>
    <lineage>
        <taxon>Bacteria</taxon>
        <taxon>Pseudomonadati</taxon>
        <taxon>Pseudomonadota</taxon>
        <taxon>Gammaproteobacteria</taxon>
        <taxon>Enterobacterales</taxon>
        <taxon>Enterobacteriaceae</taxon>
        <taxon>Salmonella</taxon>
    </lineage>
</organism>
<dbReference type="EC" id="2.1.2.9" evidence="1"/>
<dbReference type="EMBL" id="AM933173">
    <property type="protein sequence ID" value="CAR39802.1"/>
    <property type="molecule type" value="Genomic_DNA"/>
</dbReference>
<dbReference type="RefSeq" id="WP_001285172.1">
    <property type="nucleotide sequence ID" value="NC_011274.1"/>
</dbReference>
<dbReference type="SMR" id="B5RH48"/>
<dbReference type="KEGG" id="seg:SG4031"/>
<dbReference type="HOGENOM" id="CLU_033347_1_2_6"/>
<dbReference type="Proteomes" id="UP000008321">
    <property type="component" value="Chromosome"/>
</dbReference>
<dbReference type="GO" id="GO:0005829">
    <property type="term" value="C:cytosol"/>
    <property type="evidence" value="ECO:0007669"/>
    <property type="project" value="TreeGrafter"/>
</dbReference>
<dbReference type="GO" id="GO:0004479">
    <property type="term" value="F:methionyl-tRNA formyltransferase activity"/>
    <property type="evidence" value="ECO:0007669"/>
    <property type="project" value="UniProtKB-UniRule"/>
</dbReference>
<dbReference type="CDD" id="cd08646">
    <property type="entry name" value="FMT_core_Met-tRNA-FMT_N"/>
    <property type="match status" value="1"/>
</dbReference>
<dbReference type="CDD" id="cd08704">
    <property type="entry name" value="Met_tRNA_FMT_C"/>
    <property type="match status" value="1"/>
</dbReference>
<dbReference type="FunFam" id="3.10.25.10:FF:000001">
    <property type="entry name" value="Methionyl-tRNA formyltransferase"/>
    <property type="match status" value="1"/>
</dbReference>
<dbReference type="FunFam" id="3.40.50.170:FF:000003">
    <property type="entry name" value="Methionyl-tRNA formyltransferase"/>
    <property type="match status" value="1"/>
</dbReference>
<dbReference type="Gene3D" id="3.10.25.10">
    <property type="entry name" value="Formyl transferase, C-terminal domain"/>
    <property type="match status" value="1"/>
</dbReference>
<dbReference type="Gene3D" id="3.40.50.170">
    <property type="entry name" value="Formyl transferase, N-terminal domain"/>
    <property type="match status" value="1"/>
</dbReference>
<dbReference type="HAMAP" id="MF_00182">
    <property type="entry name" value="Formyl_trans"/>
    <property type="match status" value="1"/>
</dbReference>
<dbReference type="InterPro" id="IPR005794">
    <property type="entry name" value="Fmt"/>
</dbReference>
<dbReference type="InterPro" id="IPR005793">
    <property type="entry name" value="Formyl_trans_C"/>
</dbReference>
<dbReference type="InterPro" id="IPR037022">
    <property type="entry name" value="Formyl_trans_C_sf"/>
</dbReference>
<dbReference type="InterPro" id="IPR002376">
    <property type="entry name" value="Formyl_transf_N"/>
</dbReference>
<dbReference type="InterPro" id="IPR036477">
    <property type="entry name" value="Formyl_transf_N_sf"/>
</dbReference>
<dbReference type="InterPro" id="IPR011034">
    <property type="entry name" value="Formyl_transferase-like_C_sf"/>
</dbReference>
<dbReference type="InterPro" id="IPR001555">
    <property type="entry name" value="GART_AS"/>
</dbReference>
<dbReference type="InterPro" id="IPR044135">
    <property type="entry name" value="Met-tRNA-FMT_C"/>
</dbReference>
<dbReference type="InterPro" id="IPR041711">
    <property type="entry name" value="Met-tRNA-FMT_N"/>
</dbReference>
<dbReference type="NCBIfam" id="TIGR00460">
    <property type="entry name" value="fmt"/>
    <property type="match status" value="1"/>
</dbReference>
<dbReference type="PANTHER" id="PTHR11138">
    <property type="entry name" value="METHIONYL-TRNA FORMYLTRANSFERASE"/>
    <property type="match status" value="1"/>
</dbReference>
<dbReference type="PANTHER" id="PTHR11138:SF5">
    <property type="entry name" value="METHIONYL-TRNA FORMYLTRANSFERASE, MITOCHONDRIAL"/>
    <property type="match status" value="1"/>
</dbReference>
<dbReference type="Pfam" id="PF02911">
    <property type="entry name" value="Formyl_trans_C"/>
    <property type="match status" value="1"/>
</dbReference>
<dbReference type="Pfam" id="PF00551">
    <property type="entry name" value="Formyl_trans_N"/>
    <property type="match status" value="1"/>
</dbReference>
<dbReference type="SUPFAM" id="SSF50486">
    <property type="entry name" value="FMT C-terminal domain-like"/>
    <property type="match status" value="1"/>
</dbReference>
<dbReference type="SUPFAM" id="SSF53328">
    <property type="entry name" value="Formyltransferase"/>
    <property type="match status" value="1"/>
</dbReference>
<dbReference type="PROSITE" id="PS00373">
    <property type="entry name" value="GART"/>
    <property type="match status" value="1"/>
</dbReference>
<keyword id="KW-0648">Protein biosynthesis</keyword>
<keyword id="KW-0808">Transferase</keyword>
<gene>
    <name evidence="1" type="primary">fmt</name>
    <name type="ordered locus">SG4031</name>
</gene>
<comment type="function">
    <text evidence="1">Attaches a formyl group to the free amino group of methionyl-tRNA(fMet). The formyl group appears to play a dual role in the initiator identity of N-formylmethionyl-tRNA by promoting its recognition by IF2 and preventing the misappropriation of this tRNA by the elongation apparatus.</text>
</comment>
<comment type="catalytic activity">
    <reaction evidence="1">
        <text>L-methionyl-tRNA(fMet) + (6R)-10-formyltetrahydrofolate = N-formyl-L-methionyl-tRNA(fMet) + (6S)-5,6,7,8-tetrahydrofolate + H(+)</text>
        <dbReference type="Rhea" id="RHEA:24380"/>
        <dbReference type="Rhea" id="RHEA-COMP:9952"/>
        <dbReference type="Rhea" id="RHEA-COMP:9953"/>
        <dbReference type="ChEBI" id="CHEBI:15378"/>
        <dbReference type="ChEBI" id="CHEBI:57453"/>
        <dbReference type="ChEBI" id="CHEBI:78530"/>
        <dbReference type="ChEBI" id="CHEBI:78844"/>
        <dbReference type="ChEBI" id="CHEBI:195366"/>
        <dbReference type="EC" id="2.1.2.9"/>
    </reaction>
</comment>
<comment type="similarity">
    <text evidence="1">Belongs to the Fmt family.</text>
</comment>
<protein>
    <recommendedName>
        <fullName evidence="1">Methionyl-tRNA formyltransferase</fullName>
        <ecNumber evidence="1">2.1.2.9</ecNumber>
    </recommendedName>
</protein>
<accession>B5RH48</accession>
<sequence length="315" mass="33999">MSDSLRIIFAGTPDFAARHLDALLTSGHNVVGVFTQPDRPAGRGKKLMPSPVKVLAEEKGLPVFQPVSLRPQENQQLVADLHADVMVVVAYGLILPKAVLDMPRLGCINVHGSLLPRWRGAAPIQRSLWAGDAETGVTIMQMDVGLDTGDMLYKLACPITAEDTSGSLYNKLAELGPQGLITTLKQLADGTAAPEAQNEALVTHAEKLSKEEARIDWSLSAVQLERCIRAFNPWPMSWLEIDGQPVKVWQASVIEDATQSLPGTILAATKQGIQVATGKGILNLLSLQPAGKKAMSAQDLLNSRREWFIPGNHLA</sequence>
<reference key="1">
    <citation type="journal article" date="2008" name="Genome Res.">
        <title>Comparative genome analysis of Salmonella enteritidis PT4 and Salmonella gallinarum 287/91 provides insights into evolutionary and host adaptation pathways.</title>
        <authorList>
            <person name="Thomson N.R."/>
            <person name="Clayton D.J."/>
            <person name="Windhorst D."/>
            <person name="Vernikos G."/>
            <person name="Davidson S."/>
            <person name="Churcher C."/>
            <person name="Quail M.A."/>
            <person name="Stevens M."/>
            <person name="Jones M.A."/>
            <person name="Watson M."/>
            <person name="Barron A."/>
            <person name="Layton A."/>
            <person name="Pickard D."/>
            <person name="Kingsley R.A."/>
            <person name="Bignell A."/>
            <person name="Clark L."/>
            <person name="Harris B."/>
            <person name="Ormond D."/>
            <person name="Abdellah Z."/>
            <person name="Brooks K."/>
            <person name="Cherevach I."/>
            <person name="Chillingworth T."/>
            <person name="Woodward J."/>
            <person name="Norberczak H."/>
            <person name="Lord A."/>
            <person name="Arrowsmith C."/>
            <person name="Jagels K."/>
            <person name="Moule S."/>
            <person name="Mungall K."/>
            <person name="Saunders M."/>
            <person name="Whitehead S."/>
            <person name="Chabalgoity J.A."/>
            <person name="Maskell D."/>
            <person name="Humphreys T."/>
            <person name="Roberts M."/>
            <person name="Barrow P.A."/>
            <person name="Dougan G."/>
            <person name="Parkhill J."/>
        </authorList>
    </citation>
    <scope>NUCLEOTIDE SEQUENCE [LARGE SCALE GENOMIC DNA]</scope>
    <source>
        <strain>287/91 / NCTC 13346</strain>
    </source>
</reference>